<keyword id="KW-0029">Amino-acid transport</keyword>
<keyword id="KW-0472">Membrane</keyword>
<keyword id="KW-1185">Reference proteome</keyword>
<keyword id="KW-0812">Transmembrane</keyword>
<keyword id="KW-1133">Transmembrane helix</keyword>
<keyword id="KW-0813">Transport</keyword>
<sequence length="550" mass="60070">MNHVPSDQSFYIESEDEDDRKDYVEEDGGSHSDSSDDVYDENQAHIKPSSYTTAWPQSYRQSIDLYSSVPSPGIGFLGNNSMTRFGSSFLSSGLIRRHTPESLPTVTKPLLEEQADEQALPKHRLSSQGLLSPIPSRRGSMRKDEKSSMVSHEIPMSRNSSYGQAVLNGLNVLCGVGILSTPYAAKEGGWLGLMILFVYGLLSFYTGILLRYCLDSESDLETYPDIGQAAFGTTGRIFVSIVLYLELYACCVEYIILESDNLSSLYPNAALSIGGFQLDARHLFALLTTLAVLPTVWLRDLSVLSYISAGGVIASVLVVLCLFWIGLVDEVGIHSKGTTLNLSTLPVAIGLYGYCYSGHAVFPNIYTSMAKPSQYPAVLLTCFGICTLMYAGVAVMGYTMFGESTQSQFTLNLPQDLIATKIAVWTTVVNPFTKYALTISPVAMSLEELIPSRHIRSHWYAIGIRTLLVFSTLLVGLAIPFFGLVMSLIGSLLTMLVTLILPPACFLSIVRRKVTPTQMMLCVLIIIVGAISSVIGSYSALSKIVEKLTN</sequence>
<comment type="subcellular location">
    <subcellularLocation>
        <location evidence="1">Membrane</location>
        <topology evidence="1">Multi-pass membrane protein</topology>
    </subcellularLocation>
</comment>
<comment type="similarity">
    <text evidence="4">Belongs to the amino acid/polyamine transporter 2 family. Amino acid/auxin permease (AAAP) (TC 2.A.18.5) subfamily.</text>
</comment>
<comment type="sequence caution" evidence="4">
    <conflict type="erroneous gene model prediction">
        <sequence resource="EMBL-CDS" id="AAC79623"/>
    </conflict>
</comment>
<comment type="sequence caution" evidence="4">
    <conflict type="erroneous gene model prediction">
        <sequence resource="EMBL-CDS" id="AAM14997"/>
    </conflict>
</comment>
<proteinExistence type="evidence at protein level"/>
<organism>
    <name type="scientific">Arabidopsis thaliana</name>
    <name type="common">Mouse-ear cress</name>
    <dbReference type="NCBI Taxonomy" id="3702"/>
    <lineage>
        <taxon>Eukaryota</taxon>
        <taxon>Viridiplantae</taxon>
        <taxon>Streptophyta</taxon>
        <taxon>Embryophyta</taxon>
        <taxon>Tracheophyta</taxon>
        <taxon>Spermatophyta</taxon>
        <taxon>Magnoliopsida</taxon>
        <taxon>eudicotyledons</taxon>
        <taxon>Gunneridae</taxon>
        <taxon>Pentapetalae</taxon>
        <taxon>rosids</taxon>
        <taxon>malvids</taxon>
        <taxon>Brassicales</taxon>
        <taxon>Brassicaceae</taxon>
        <taxon>Camelineae</taxon>
        <taxon>Arabidopsis</taxon>
    </lineage>
</organism>
<feature type="chain" id="PRO_0000440104" description="Amino acid transporter AVT1C">
    <location>
        <begin position="1"/>
        <end position="550"/>
    </location>
</feature>
<feature type="transmembrane region" description="Helical; Name=1" evidence="1">
    <location>
        <begin position="165"/>
        <end position="185"/>
    </location>
</feature>
<feature type="transmembrane region" description="Helical; Name=2" evidence="1">
    <location>
        <begin position="190"/>
        <end position="210"/>
    </location>
</feature>
<feature type="transmembrane region" description="Helical; Name=3" evidence="1">
    <location>
        <begin position="237"/>
        <end position="257"/>
    </location>
</feature>
<feature type="transmembrane region" description="Helical; Name=4" evidence="1">
    <location>
        <begin position="283"/>
        <end position="303"/>
    </location>
</feature>
<feature type="transmembrane region" description="Helical; Name=5" evidence="1">
    <location>
        <begin position="307"/>
        <end position="327"/>
    </location>
</feature>
<feature type="transmembrane region" description="Helical; Name=6" evidence="1">
    <location>
        <begin position="342"/>
        <end position="362"/>
    </location>
</feature>
<feature type="transmembrane region" description="Helical; Name=7" evidence="1">
    <location>
        <begin position="377"/>
        <end position="397"/>
    </location>
</feature>
<feature type="transmembrane region" description="Helical; Name=8" evidence="1">
    <location>
        <begin position="422"/>
        <end position="442"/>
    </location>
</feature>
<feature type="transmembrane region" description="Helical; Name=9" evidence="1">
    <location>
        <begin position="462"/>
        <end position="484"/>
    </location>
</feature>
<feature type="transmembrane region" description="Helical; Name=10" evidence="1">
    <location>
        <begin position="488"/>
        <end position="510"/>
    </location>
</feature>
<feature type="transmembrane region" description="Helical; Name=11" evidence="1">
    <location>
        <begin position="521"/>
        <end position="541"/>
    </location>
</feature>
<feature type="region of interest" description="Disordered" evidence="2">
    <location>
        <begin position="1"/>
        <end position="44"/>
    </location>
</feature>
<feature type="region of interest" description="Disordered" evidence="2">
    <location>
        <begin position="128"/>
        <end position="148"/>
    </location>
</feature>
<feature type="compositionally biased region" description="Polar residues" evidence="2">
    <location>
        <begin position="1"/>
        <end position="11"/>
    </location>
</feature>
<feature type="compositionally biased region" description="Basic and acidic residues" evidence="2">
    <location>
        <begin position="20"/>
        <end position="34"/>
    </location>
</feature>
<feature type="sequence conflict" description="In Ref. 3; AAK92736." evidence="4" ref="3">
    <original>S</original>
    <variation>I</variation>
    <location>
        <position position="259"/>
    </location>
</feature>
<protein>
    <recommendedName>
        <fullName evidence="4">Amino acid transporter AVT1C</fullName>
        <shortName evidence="3">AtAvt1C</shortName>
    </recommendedName>
</protein>
<evidence type="ECO:0000255" key="1"/>
<evidence type="ECO:0000256" key="2">
    <source>
        <dbReference type="SAM" id="MobiDB-lite"/>
    </source>
</evidence>
<evidence type="ECO:0000303" key="3">
    <source>
    </source>
</evidence>
<evidence type="ECO:0000305" key="4"/>
<evidence type="ECO:0000312" key="5">
    <source>
        <dbReference type="Araport" id="AT2G39130"/>
    </source>
</evidence>
<evidence type="ECO:0000312" key="6">
    <source>
        <dbReference type="EMBL" id="AAC79623.3"/>
    </source>
</evidence>
<evidence type="ECO:0000312" key="7">
    <source>
        <dbReference type="EMBL" id="AAM14997.1"/>
    </source>
</evidence>
<gene>
    <name evidence="3" type="primary">AVT1C</name>
    <name evidence="5" type="ordered locus">At2g39130</name>
    <name evidence="7" type="ORF">T16B24.23</name>
    <name evidence="6" type="ORF">T7F6.1</name>
</gene>
<accession>F4IUW3</accession>
<accession>Q8S8P2</accession>
<accession>Q949Y8</accession>
<accession>Q9ZUZ5</accession>
<dbReference type="EMBL" id="AC004697">
    <property type="protein sequence ID" value="AAM14997.1"/>
    <property type="status" value="ALT_SEQ"/>
    <property type="molecule type" value="Genomic_DNA"/>
</dbReference>
<dbReference type="EMBL" id="AC005770">
    <property type="protein sequence ID" value="AAC79623.3"/>
    <property type="status" value="ALT_SEQ"/>
    <property type="molecule type" value="Genomic_DNA"/>
</dbReference>
<dbReference type="EMBL" id="CP002685">
    <property type="protein sequence ID" value="AEC09638.1"/>
    <property type="molecule type" value="Genomic_DNA"/>
</dbReference>
<dbReference type="EMBL" id="CP002685">
    <property type="protein sequence ID" value="ANM62501.1"/>
    <property type="molecule type" value="Genomic_DNA"/>
</dbReference>
<dbReference type="EMBL" id="AY050801">
    <property type="protein sequence ID" value="AAK92736.1"/>
    <property type="molecule type" value="mRNA"/>
</dbReference>
<dbReference type="PIR" id="E84813">
    <property type="entry name" value="E84813"/>
</dbReference>
<dbReference type="PIR" id="T02589">
    <property type="entry name" value="T02589"/>
</dbReference>
<dbReference type="RefSeq" id="NP_001324655.1">
    <property type="nucleotide sequence ID" value="NM_001336758.1"/>
</dbReference>
<dbReference type="RefSeq" id="NP_850312.1">
    <property type="nucleotide sequence ID" value="NM_179981.3"/>
</dbReference>
<dbReference type="SMR" id="F4IUW3"/>
<dbReference type="FunCoup" id="F4IUW3">
    <property type="interactions" value="355"/>
</dbReference>
<dbReference type="IntAct" id="F4IUW3">
    <property type="interactions" value="2"/>
</dbReference>
<dbReference type="iPTMnet" id="F4IUW3"/>
<dbReference type="PaxDb" id="3702-AT2G39130.1"/>
<dbReference type="EnsemblPlants" id="AT2G39130.1">
    <property type="protein sequence ID" value="AT2G39130.1"/>
    <property type="gene ID" value="AT2G39130"/>
</dbReference>
<dbReference type="EnsemblPlants" id="AT2G39130.2">
    <property type="protein sequence ID" value="AT2G39130.2"/>
    <property type="gene ID" value="AT2G39130"/>
</dbReference>
<dbReference type="GeneID" id="818499"/>
<dbReference type="Gramene" id="AT2G39130.1">
    <property type="protein sequence ID" value="AT2G39130.1"/>
    <property type="gene ID" value="AT2G39130"/>
</dbReference>
<dbReference type="Gramene" id="AT2G39130.2">
    <property type="protein sequence ID" value="AT2G39130.2"/>
    <property type="gene ID" value="AT2G39130"/>
</dbReference>
<dbReference type="KEGG" id="ath:AT2G39130"/>
<dbReference type="Araport" id="AT2G39130"/>
<dbReference type="TAIR" id="AT2G39130"/>
<dbReference type="eggNOG" id="KOG1303">
    <property type="taxonomic scope" value="Eukaryota"/>
</dbReference>
<dbReference type="HOGENOM" id="CLU_009646_1_0_1"/>
<dbReference type="InParanoid" id="F4IUW3"/>
<dbReference type="OMA" id="MKWTHIA"/>
<dbReference type="OrthoDB" id="655540at2759"/>
<dbReference type="PRO" id="PR:F4IUW3"/>
<dbReference type="Proteomes" id="UP000006548">
    <property type="component" value="Chromosome 2"/>
</dbReference>
<dbReference type="ExpressionAtlas" id="F4IUW3">
    <property type="expression patterns" value="baseline and differential"/>
</dbReference>
<dbReference type="GO" id="GO:0016020">
    <property type="term" value="C:membrane"/>
    <property type="evidence" value="ECO:0007669"/>
    <property type="project" value="UniProtKB-SubCell"/>
</dbReference>
<dbReference type="GO" id="GO:0000325">
    <property type="term" value="C:plant-type vacuole"/>
    <property type="evidence" value="ECO:0007005"/>
    <property type="project" value="TAIR"/>
</dbReference>
<dbReference type="GO" id="GO:0006865">
    <property type="term" value="P:amino acid transport"/>
    <property type="evidence" value="ECO:0007669"/>
    <property type="project" value="UniProtKB-KW"/>
</dbReference>
<dbReference type="FunFam" id="1.20.1740.10:FF:000047">
    <property type="entry name" value="Amino acid transporter AVT1A"/>
    <property type="match status" value="1"/>
</dbReference>
<dbReference type="InterPro" id="IPR013057">
    <property type="entry name" value="AA_transpt_TM"/>
</dbReference>
<dbReference type="PANTHER" id="PTHR48017">
    <property type="entry name" value="OS05G0424000 PROTEIN-RELATED"/>
    <property type="match status" value="1"/>
</dbReference>
<dbReference type="Pfam" id="PF01490">
    <property type="entry name" value="Aa_trans"/>
    <property type="match status" value="1"/>
</dbReference>
<reference key="1">
    <citation type="journal article" date="1999" name="Nature">
        <title>Sequence and analysis of chromosome 2 of the plant Arabidopsis thaliana.</title>
        <authorList>
            <person name="Lin X."/>
            <person name="Kaul S."/>
            <person name="Rounsley S.D."/>
            <person name="Shea T.P."/>
            <person name="Benito M.-I."/>
            <person name="Town C.D."/>
            <person name="Fujii C.Y."/>
            <person name="Mason T.M."/>
            <person name="Bowman C.L."/>
            <person name="Barnstead M.E."/>
            <person name="Feldblyum T.V."/>
            <person name="Buell C.R."/>
            <person name="Ketchum K.A."/>
            <person name="Lee J.J."/>
            <person name="Ronning C.M."/>
            <person name="Koo H.L."/>
            <person name="Moffat K.S."/>
            <person name="Cronin L.A."/>
            <person name="Shen M."/>
            <person name="Pai G."/>
            <person name="Van Aken S."/>
            <person name="Umayam L."/>
            <person name="Tallon L.J."/>
            <person name="Gill J.E."/>
            <person name="Adams M.D."/>
            <person name="Carrera A.J."/>
            <person name="Creasy T.H."/>
            <person name="Goodman H.M."/>
            <person name="Somerville C.R."/>
            <person name="Copenhaver G.P."/>
            <person name="Preuss D."/>
            <person name="Nierman W.C."/>
            <person name="White O."/>
            <person name="Eisen J.A."/>
            <person name="Salzberg S.L."/>
            <person name="Fraser C.M."/>
            <person name="Venter J.C."/>
        </authorList>
    </citation>
    <scope>NUCLEOTIDE SEQUENCE [LARGE SCALE GENOMIC DNA]</scope>
    <source>
        <strain>cv. Columbia</strain>
    </source>
</reference>
<reference key="2">
    <citation type="journal article" date="2017" name="Plant J.">
        <title>Araport11: a complete reannotation of the Arabidopsis thaliana reference genome.</title>
        <authorList>
            <person name="Cheng C.Y."/>
            <person name="Krishnakumar V."/>
            <person name="Chan A.P."/>
            <person name="Thibaud-Nissen F."/>
            <person name="Schobel S."/>
            <person name="Town C.D."/>
        </authorList>
    </citation>
    <scope>GENOME REANNOTATION</scope>
    <source>
        <strain>cv. Columbia</strain>
    </source>
</reference>
<reference key="3">
    <citation type="journal article" date="2003" name="Science">
        <title>Empirical analysis of transcriptional activity in the Arabidopsis genome.</title>
        <authorList>
            <person name="Yamada K."/>
            <person name="Lim J."/>
            <person name="Dale J.M."/>
            <person name="Chen H."/>
            <person name="Shinn P."/>
            <person name="Palm C.J."/>
            <person name="Southwick A.M."/>
            <person name="Wu H.C."/>
            <person name="Kim C.J."/>
            <person name="Nguyen M."/>
            <person name="Pham P.K."/>
            <person name="Cheuk R.F."/>
            <person name="Karlin-Newmann G."/>
            <person name="Liu S.X."/>
            <person name="Lam B."/>
            <person name="Sakano H."/>
            <person name="Wu T."/>
            <person name="Yu G."/>
            <person name="Miranda M."/>
            <person name="Quach H.L."/>
            <person name="Tripp M."/>
            <person name="Chang C.H."/>
            <person name="Lee J.M."/>
            <person name="Toriumi M.J."/>
            <person name="Chan M.M."/>
            <person name="Tang C.C."/>
            <person name="Onodera C.S."/>
            <person name="Deng J.M."/>
            <person name="Akiyama K."/>
            <person name="Ansari Y."/>
            <person name="Arakawa T."/>
            <person name="Banh J."/>
            <person name="Banno F."/>
            <person name="Bowser L."/>
            <person name="Brooks S.Y."/>
            <person name="Carninci P."/>
            <person name="Chao Q."/>
            <person name="Choy N."/>
            <person name="Enju A."/>
            <person name="Goldsmith A.D."/>
            <person name="Gurjal M."/>
            <person name="Hansen N.F."/>
            <person name="Hayashizaki Y."/>
            <person name="Johnson-Hopson C."/>
            <person name="Hsuan V.W."/>
            <person name="Iida K."/>
            <person name="Karnes M."/>
            <person name="Khan S."/>
            <person name="Koesema E."/>
            <person name="Ishida J."/>
            <person name="Jiang P.X."/>
            <person name="Jones T."/>
            <person name="Kawai J."/>
            <person name="Kamiya A."/>
            <person name="Meyers C."/>
            <person name="Nakajima M."/>
            <person name="Narusaka M."/>
            <person name="Seki M."/>
            <person name="Sakurai T."/>
            <person name="Satou M."/>
            <person name="Tamse R."/>
            <person name="Vaysberg M."/>
            <person name="Wallender E.K."/>
            <person name="Wong C."/>
            <person name="Yamamura Y."/>
            <person name="Yuan S."/>
            <person name="Shinozaki K."/>
            <person name="Davis R.W."/>
            <person name="Theologis A."/>
            <person name="Ecker J.R."/>
        </authorList>
    </citation>
    <scope>NUCLEOTIDE SEQUENCE [LARGE SCALE MRNA]</scope>
    <source>
        <strain>cv. Columbia</strain>
    </source>
</reference>
<reference key="4">
    <citation type="journal article" date="2009" name="Plant Physiol.">
        <title>Large-scale Arabidopsis phosphoproteome profiling reveals novel chloroplast kinase substrates and phosphorylation networks.</title>
        <authorList>
            <person name="Reiland S."/>
            <person name="Messerli G."/>
            <person name="Baerenfaller K."/>
            <person name="Gerrits B."/>
            <person name="Endler A."/>
            <person name="Grossmann J."/>
            <person name="Gruissem W."/>
            <person name="Baginsky S."/>
        </authorList>
    </citation>
    <scope>IDENTIFICATION BY MASS SPECTROMETRY [LARGE SCALE ANALYSIS]</scope>
</reference>
<reference key="5">
    <citation type="journal article" date="2017" name="FEBS Lett.">
        <title>Functional identification of AtAVT3, a family of vacuolar amino acid transporters, in Arabidopsis.</title>
        <authorList>
            <person name="Fujiki Y."/>
            <person name="Teshima H."/>
            <person name="Kashiwao S."/>
            <person name="Kawano-Kawada M."/>
            <person name="Ohsumi Y."/>
            <person name="Kakinuma Y."/>
            <person name="Sekito T."/>
        </authorList>
    </citation>
    <scope>GENE FAMILY</scope>
    <scope>NOMENCLATURE</scope>
</reference>
<name>AVT1C_ARATH</name>